<feature type="chain" id="PRO_0000373088" description="DNA-directed RNA polymerase RPB1 homolog">
    <location>
        <begin position="1"/>
        <end position="1450"/>
    </location>
</feature>
<evidence type="ECO:0000250" key="1">
    <source>
        <dbReference type="UniProtKB" id="P24928"/>
    </source>
</evidence>
<evidence type="ECO:0000250" key="2">
    <source>
        <dbReference type="UniProtKB" id="P42486"/>
    </source>
</evidence>
<evidence type="ECO:0000305" key="3"/>
<organism>
    <name type="scientific">African swine fever virus (isolate Pig/Kenya/KEN-50/1950)</name>
    <name type="common">ASFV</name>
    <dbReference type="NCBI Taxonomy" id="561445"/>
    <lineage>
        <taxon>Viruses</taxon>
        <taxon>Varidnaviria</taxon>
        <taxon>Bamfordvirae</taxon>
        <taxon>Nucleocytoviricota</taxon>
        <taxon>Pokkesviricetes</taxon>
        <taxon>Asfuvirales</taxon>
        <taxon>Asfarviridae</taxon>
        <taxon>Asfivirus</taxon>
        <taxon>African swine fever virus</taxon>
    </lineage>
</organism>
<keyword id="KW-0240">DNA-directed RNA polymerase</keyword>
<keyword id="KW-0548">Nucleotidyltransferase</keyword>
<keyword id="KW-0804">Transcription</keyword>
<keyword id="KW-0808">Transferase</keyword>
<keyword id="KW-1195">Viral transcription</keyword>
<keyword id="KW-0946">Virion</keyword>
<sequence length="1450" mass="163832">MEAGYAEIAAVQFNIAGDNDHKRQGVMEVTISNLFEGTLPAEGGIYDARMGTTDHHYKCITCSHQRKQCMGHPGILQMHAPVLQPLFIAEIRRWLRVICLNCGAPIVDLKRYEHLIRPKRLAEAASSQTEGKQCYVCKVIHPKIIKDSEDYFTFWVDQQGKIDKLYPQIIREIFSRVTYDTVVKLGRSKNSHPEKLVLKAIQIPPISIRPGIRLGIGSGPQSFHDINNVIQYIVRKNLLIPKDLQIVRGQKIPLNVDRNLQTIQQLYYNFLLDSVSTTATQGGTGKRGIVMGARPAPSIMRRLPRKEGRIRKSLLGSQVWSISRSTICGNSDLHLDEVGYPISFARTLQVAETVQHYNINRLMPYFLNGKRQYPGCSRVYKQITQSVHDIEGLKQDFRLEVGDILYRDVVTGDVAFFNRQPSLERSSIGVHRIVVLENPKISTFQMNVSACAWYNADFDGDQMNLWVPWSVMSRVEAELLCSVRNWFISTKSSGPVNGQVQDSTVGSFLLTRTNTPMGKNVMNKLHAMGLFQTTQTDPPCFANYSPTDLLDGKLVVSMLLKQTPINYQRAPTWYSEVYAPYMHYNKQDISTQIRNGELIEGVLDKKAVGAGSSGGIYHLISRRYGPQQALKMIFATQQLALNYVRNAGFTVSTADMLLTPEAHQEVQEIINELLLESEEINNRLLHGDIMPPIGLTTHDFYEKLQLNALKFPDRILKPIMNSINPETNGLFQMVATGAKGSNPNMIHIMAGIGQIEINTQRIQPQFSFGRTLVYYPRFALEAQAYGFICNSYIAGLTSPEFIFGEMNGRFDLINKALSTSSTGYANRKAIFGLQSCIVDYYRRVSIDTRLVQQLYGEDGLDARQLETVRFETIMLSDQELEDKFKYTGIQSPLFEEEFSRLKKDRDKYRQIFLNIENFNFSQLLTDVRQVPVNVASIVKNILLSSTSGVLPFDEKSILQKYTMVKTFCKNLPYVFINNIQERLQTPIPVYLKRAASLMRILIRIELATVKTLNITCEQMSAILDLIRLQYTQSLINYGEAVGILAAQSVSEPLTQYMLDSHHRSVAGGTNKSGIVRPQEIFSAKPVEAEQSSEMLLRLKNPEVETNKTYAQEIANSIELITFERLILQWHLLYETYSSTKKNVMYPDFASDVEWMTDFLENHPLLQPPEDIANWCIRLELNKTTMILKSISLESIVNSLRAKHPNTYIMHSVENTASGIPIIIRIYLRESAFRRSTNTRMATDEKIAVNLVDKLLNSTIRGIPGIKNANVVKLMRHRVDAQGKLVRLDNIYAIKTNGTNIFGAMLDDNIDPYTIVSSSIGDTMELYGIEAARQKIISEIRTVMGDKGPNHRHLLMYADLMTRTGQVTSLEKAGLNAREPSNVLLRMALSSPVQVLTDAAIDSAVNPIYGIAAPTLMGSVPRIGTMYSDIIMDEKYITENYKSVDSMIDML</sequence>
<reference key="1">
    <citation type="submission" date="2003-03" db="EMBL/GenBank/DDBJ databases">
        <title>African swine fever virus genomes.</title>
        <authorList>
            <person name="Kutish G.F."/>
            <person name="Rock D.L."/>
        </authorList>
    </citation>
    <scope>NUCLEOTIDE SEQUENCE [LARGE SCALE GENOMIC DNA]</scope>
</reference>
<organismHost>
    <name type="scientific">Ornithodoros</name>
    <name type="common">relapsing fever ticks</name>
    <dbReference type="NCBI Taxonomy" id="6937"/>
</organismHost>
<organismHost>
    <name type="scientific">Phacochoerus aethiopicus</name>
    <name type="common">Warthog</name>
    <dbReference type="NCBI Taxonomy" id="85517"/>
</organismHost>
<organismHost>
    <name type="scientific">Phacochoerus africanus</name>
    <name type="common">Warthog</name>
    <dbReference type="NCBI Taxonomy" id="41426"/>
</organismHost>
<organismHost>
    <name type="scientific">Potamochoerus larvatus</name>
    <name type="common">Bushpig</name>
    <dbReference type="NCBI Taxonomy" id="273792"/>
</organismHost>
<organismHost>
    <name type="scientific">Sus scrofa</name>
    <name type="common">Pig</name>
    <dbReference type="NCBI Taxonomy" id="9823"/>
</organismHost>
<accession>P0C989</accession>
<gene>
    <name type="ordered locus">Ken-111</name>
</gene>
<comment type="function">
    <text evidence="1">Catalytic component of the DNA-directed RNA polymerase (RNAP) that catalyzes the transcription in the cytoplasm of viral DNA into RNA using the four ribonucleoside triphosphates as substrates (By similarity). Forms the polymerase active center together with RPB2 (By similarity). Part of the core element with the central large cleft, the clamp element that moves to open and close the cleft and the jaws that are thought to grab the incoming DNA template (By similarity).</text>
</comment>
<comment type="catalytic activity">
    <reaction>
        <text>RNA(n) + a ribonucleoside 5'-triphosphate = RNA(n+1) + diphosphate</text>
        <dbReference type="Rhea" id="RHEA:21248"/>
        <dbReference type="Rhea" id="RHEA-COMP:14527"/>
        <dbReference type="Rhea" id="RHEA-COMP:17342"/>
        <dbReference type="ChEBI" id="CHEBI:33019"/>
        <dbReference type="ChEBI" id="CHEBI:61557"/>
        <dbReference type="ChEBI" id="CHEBI:140395"/>
        <dbReference type="EC" id="2.7.7.6"/>
    </reaction>
</comment>
<comment type="subunit">
    <text evidence="2">Part of the viral DNA-directed RNA polymerase that consists of 8 polII-like subunits (RPB1, RPB2, RPB3, RPB5, RPB6, RPB7, RPB9, RPB10), a capping enzyme and a termination factor.</text>
</comment>
<comment type="subcellular location">
    <subcellularLocation>
        <location evidence="2">Virion</location>
    </subcellularLocation>
    <text evidence="2">Found in association with viral nucleoid.</text>
</comment>
<comment type="induction">
    <text evidence="3">Expressed in the late phase of the viral replicative cycle.</text>
</comment>
<comment type="domain">
    <text evidence="2">Lacks the typical C-terminal domain (CTD).</text>
</comment>
<comment type="similarity">
    <text evidence="3">Belongs to the RNA polymerase beta' chain family.</text>
</comment>
<protein>
    <recommendedName>
        <fullName evidence="2">DNA-directed RNA polymerase RPB1 homolog</fullName>
        <ecNumber>2.7.7.6</ecNumber>
    </recommendedName>
</protein>
<dbReference type="EC" id="2.7.7.6"/>
<dbReference type="EMBL" id="AY261360">
    <property type="status" value="NOT_ANNOTATED_CDS"/>
    <property type="molecule type" value="Genomic_DNA"/>
</dbReference>
<dbReference type="SMR" id="P0C989"/>
<dbReference type="Proteomes" id="UP000000861">
    <property type="component" value="Segment"/>
</dbReference>
<dbReference type="GO" id="GO:0000428">
    <property type="term" value="C:DNA-directed RNA polymerase complex"/>
    <property type="evidence" value="ECO:0007669"/>
    <property type="project" value="UniProtKB-KW"/>
</dbReference>
<dbReference type="GO" id="GO:0044423">
    <property type="term" value="C:virion component"/>
    <property type="evidence" value="ECO:0007669"/>
    <property type="project" value="UniProtKB-KW"/>
</dbReference>
<dbReference type="GO" id="GO:0003677">
    <property type="term" value="F:DNA binding"/>
    <property type="evidence" value="ECO:0007669"/>
    <property type="project" value="InterPro"/>
</dbReference>
<dbReference type="GO" id="GO:0003899">
    <property type="term" value="F:DNA-directed RNA polymerase activity"/>
    <property type="evidence" value="ECO:0007669"/>
    <property type="project" value="UniProtKB-EC"/>
</dbReference>
<dbReference type="GO" id="GO:0006351">
    <property type="term" value="P:DNA-templated transcription"/>
    <property type="evidence" value="ECO:0007669"/>
    <property type="project" value="InterPro"/>
</dbReference>
<dbReference type="GO" id="GO:0019083">
    <property type="term" value="P:viral transcription"/>
    <property type="evidence" value="ECO:0007669"/>
    <property type="project" value="UniProtKB-KW"/>
</dbReference>
<dbReference type="Gene3D" id="1.10.132.30">
    <property type="match status" value="1"/>
</dbReference>
<dbReference type="Gene3D" id="2.40.40.20">
    <property type="match status" value="1"/>
</dbReference>
<dbReference type="Gene3D" id="3.30.1360.140">
    <property type="match status" value="1"/>
</dbReference>
<dbReference type="Gene3D" id="6.10.250.2940">
    <property type="match status" value="1"/>
</dbReference>
<dbReference type="Gene3D" id="3.30.1490.180">
    <property type="entry name" value="RNA polymerase ii"/>
    <property type="match status" value="1"/>
</dbReference>
<dbReference type="Gene3D" id="4.10.860.120">
    <property type="entry name" value="RNA polymerase II, clamp domain"/>
    <property type="match status" value="1"/>
</dbReference>
<dbReference type="Gene3D" id="1.10.274.100">
    <property type="entry name" value="RNA polymerase Rpb1, domain 3"/>
    <property type="match status" value="1"/>
</dbReference>
<dbReference type="InterPro" id="IPR045867">
    <property type="entry name" value="DNA-dir_RpoC_beta_prime"/>
</dbReference>
<dbReference type="InterPro" id="IPR000722">
    <property type="entry name" value="RNA_pol_asu"/>
</dbReference>
<dbReference type="InterPro" id="IPR006592">
    <property type="entry name" value="RNA_pol_N"/>
</dbReference>
<dbReference type="InterPro" id="IPR007080">
    <property type="entry name" value="RNA_pol_Rpb1_1"/>
</dbReference>
<dbReference type="InterPro" id="IPR007066">
    <property type="entry name" value="RNA_pol_Rpb1_3"/>
</dbReference>
<dbReference type="InterPro" id="IPR042102">
    <property type="entry name" value="RNA_pol_Rpb1_3_sf"/>
</dbReference>
<dbReference type="InterPro" id="IPR007083">
    <property type="entry name" value="RNA_pol_Rpb1_4"/>
</dbReference>
<dbReference type="InterPro" id="IPR007081">
    <property type="entry name" value="RNA_pol_Rpb1_5"/>
</dbReference>
<dbReference type="InterPro" id="IPR007073">
    <property type="entry name" value="RNA_pol_Rpb1_7"/>
</dbReference>
<dbReference type="InterPro" id="IPR038593">
    <property type="entry name" value="RNA_pol_Rpb1_7_sf"/>
</dbReference>
<dbReference type="InterPro" id="IPR044893">
    <property type="entry name" value="RNA_pol_Rpb1_clamp_domain"/>
</dbReference>
<dbReference type="InterPro" id="IPR038120">
    <property type="entry name" value="Rpb1_funnel_sf"/>
</dbReference>
<dbReference type="PANTHER" id="PTHR19376">
    <property type="entry name" value="DNA-DIRECTED RNA POLYMERASE"/>
    <property type="match status" value="1"/>
</dbReference>
<dbReference type="PANTHER" id="PTHR19376:SF11">
    <property type="entry name" value="DNA-DIRECTED RNA POLYMERASE I SUBUNIT RPA1"/>
    <property type="match status" value="1"/>
</dbReference>
<dbReference type="Pfam" id="PF04997">
    <property type="entry name" value="RNA_pol_Rpb1_1"/>
    <property type="match status" value="1"/>
</dbReference>
<dbReference type="Pfam" id="PF00623">
    <property type="entry name" value="RNA_pol_Rpb1_2"/>
    <property type="match status" value="1"/>
</dbReference>
<dbReference type="Pfam" id="PF04983">
    <property type="entry name" value="RNA_pol_Rpb1_3"/>
    <property type="match status" value="1"/>
</dbReference>
<dbReference type="Pfam" id="PF05000">
    <property type="entry name" value="RNA_pol_Rpb1_4"/>
    <property type="match status" value="1"/>
</dbReference>
<dbReference type="Pfam" id="PF04998">
    <property type="entry name" value="RNA_pol_Rpb1_5"/>
    <property type="match status" value="1"/>
</dbReference>
<dbReference type="Pfam" id="PF04990">
    <property type="entry name" value="RNA_pol_Rpb1_7"/>
    <property type="match status" value="1"/>
</dbReference>
<dbReference type="SMART" id="SM00663">
    <property type="entry name" value="RPOLA_N"/>
    <property type="match status" value="1"/>
</dbReference>
<dbReference type="SUPFAM" id="SSF64484">
    <property type="entry name" value="beta and beta-prime subunits of DNA dependent RNA-polymerase"/>
    <property type="match status" value="1"/>
</dbReference>
<name>RPB1_ASFK5</name>
<proteinExistence type="inferred from homology"/>